<dbReference type="EMBL" id="ACFL01000035">
    <property type="protein sequence ID" value="EEU08348.1"/>
    <property type="status" value="ALT_INIT"/>
    <property type="molecule type" value="Genomic_DNA"/>
</dbReference>
<dbReference type="GlyCosmos" id="C7GLH7">
    <property type="glycosylation" value="2 sites, No reported glycans"/>
</dbReference>
<dbReference type="OrthoDB" id="37671at4893"/>
<dbReference type="Proteomes" id="UP000008073">
    <property type="component" value="Unassembled WGS sequence"/>
</dbReference>
<dbReference type="GO" id="GO:0000324">
    <property type="term" value="C:fungal-type vacuole"/>
    <property type="evidence" value="ECO:0007669"/>
    <property type="project" value="TreeGrafter"/>
</dbReference>
<dbReference type="GO" id="GO:0005886">
    <property type="term" value="C:plasma membrane"/>
    <property type="evidence" value="ECO:0007669"/>
    <property type="project" value="UniProtKB-SubCell"/>
</dbReference>
<dbReference type="GO" id="GO:0006869">
    <property type="term" value="P:lipid transport"/>
    <property type="evidence" value="ECO:0007669"/>
    <property type="project" value="UniProtKB-KW"/>
</dbReference>
<dbReference type="InterPro" id="IPR007568">
    <property type="entry name" value="RTA1"/>
</dbReference>
<dbReference type="PANTHER" id="PTHR31465">
    <property type="entry name" value="PROTEIN RTA1-RELATED"/>
    <property type="match status" value="1"/>
</dbReference>
<dbReference type="PANTHER" id="PTHR31465:SF9">
    <property type="entry name" value="SPHINGOID LONG-CHAIN BASE TRANSPORTER RSB1"/>
    <property type="match status" value="1"/>
</dbReference>
<dbReference type="Pfam" id="PF04479">
    <property type="entry name" value="RTA1"/>
    <property type="match status" value="1"/>
</dbReference>
<comment type="function">
    <text evidence="1">Catalyzes the ATP-dependent translocation of sphingoid long-chain bases (LCBs) from the cytoplasmic site toward the extracytoplasmic side of the membrane (flip-flop). Involved in the establishment of the functional lipid asymmetry of the plasma membrane. Regulates intracellular levels of LCBs, sphingolipid precursors that are growth inhibitory at increased levels (By similarity).</text>
</comment>
<comment type="subcellular location">
    <subcellularLocation>
        <location evidence="1">Cell membrane</location>
        <topology>Multi-pass membrane protein</topology>
    </subcellularLocation>
</comment>
<comment type="induction">
    <text evidence="1">In response to loss of mitochondrial DNA in a transcription factor PDR3-dependent manner. Induced in response to altered glycerophospholipid asymmetry of the plasma membrane in a transcription factor PDR1-dependent manner (By similarity).</text>
</comment>
<comment type="similarity">
    <text evidence="3">Belongs to the lipid-translocating exporter (LTE) (TC 9.A.26.1) family.</text>
</comment>
<comment type="sequence caution" evidence="3">
    <conflict type="erroneous initiation">
        <sequence resource="EMBL-CDS" id="EEU08348"/>
    </conflict>
</comment>
<protein>
    <recommendedName>
        <fullName>Sphingoid long-chain base transporter RSB1</fullName>
    </recommendedName>
</protein>
<keyword id="KW-1003">Cell membrane</keyword>
<keyword id="KW-0325">Glycoprotein</keyword>
<keyword id="KW-0445">Lipid transport</keyword>
<keyword id="KW-0472">Membrane</keyword>
<keyword id="KW-0812">Transmembrane</keyword>
<keyword id="KW-1133">Transmembrane helix</keyword>
<keyword id="KW-0813">Transport</keyword>
<reference key="1">
    <citation type="journal article" date="2009" name="Genome Res.">
        <title>Genome structure of a Saccharomyces cerevisiae strain widely used in bioethanol production.</title>
        <authorList>
            <person name="Argueso J.L."/>
            <person name="Carazzolle M.F."/>
            <person name="Mieczkowski P.A."/>
            <person name="Duarte F.M."/>
            <person name="Netto O.V.C."/>
            <person name="Missawa S.K."/>
            <person name="Galzerani F."/>
            <person name="Costa G.G.L."/>
            <person name="Vidal R.O."/>
            <person name="Noronha M.F."/>
            <person name="Dominska M."/>
            <person name="Andrietta M.G.S."/>
            <person name="Andrietta S.R."/>
            <person name="Cunha A.F."/>
            <person name="Gomes L.H."/>
            <person name="Tavares F.C.A."/>
            <person name="Alcarde A.R."/>
            <person name="Dietrich F.S."/>
            <person name="McCusker J.H."/>
            <person name="Petes T.D."/>
            <person name="Pereira G.A.G."/>
        </authorList>
    </citation>
    <scope>NUCLEOTIDE SEQUENCE [LARGE SCALE GENOMIC DNA]</scope>
    <source>
        <strain>JAY291</strain>
    </source>
</reference>
<accession>C7GLH7</accession>
<sequence>MSNATNNTLGSLLPQLEAAANSNSLYGGMVPNLRFNITMIVIWGILLTIHVVQLLMRQYWFSIAFICTGILEVLGFIGRTWSHSNVADMDAFLLNMICLTIAPVFTMGGIYYQLAKLIEVYGHRFSLLPSPMAYSFIFICSDIVSLVVQAVGGGLCGVAVTDGTSTTTGNHVFIAGLAIQVASMAIFLMLWFHFLFRIYISVRWEHINSRPISLSLLKISQTEVDYLYREKFHFLRLEPKRWVFHYFNLAITVAVLTIFTRCCYRLAELVVGWDGYLITHEWYFIILDALMMAIATVTLTIFHPGFAFKGKSTSIPITPGHVDPETLPHTDDVEDILDTSDSKQFDIEKEEFQASMKYPISTFKQFMSKIANLFSSKKKAKL</sequence>
<organism>
    <name type="scientific">Saccharomyces cerevisiae (strain JAY291)</name>
    <name type="common">Baker's yeast</name>
    <dbReference type="NCBI Taxonomy" id="574961"/>
    <lineage>
        <taxon>Eukaryota</taxon>
        <taxon>Fungi</taxon>
        <taxon>Dikarya</taxon>
        <taxon>Ascomycota</taxon>
        <taxon>Saccharomycotina</taxon>
        <taxon>Saccharomycetes</taxon>
        <taxon>Saccharomycetales</taxon>
        <taxon>Saccharomycetaceae</taxon>
        <taxon>Saccharomyces</taxon>
    </lineage>
</organism>
<proteinExistence type="inferred from homology"/>
<gene>
    <name type="primary">RSB1</name>
    <name type="ORF">C1Q_01055</name>
</gene>
<evidence type="ECO:0000250" key="1"/>
<evidence type="ECO:0000255" key="2"/>
<evidence type="ECO:0000305" key="3"/>
<name>RSB1_YEAS2</name>
<feature type="chain" id="PRO_0000393315" description="Sphingoid long-chain base transporter RSB1" evidence="1">
    <location>
        <begin position="1"/>
        <end position="382"/>
    </location>
</feature>
<feature type="topological domain" description="Extracellular" evidence="1">
    <location>
        <begin position="1"/>
        <end position="34"/>
    </location>
</feature>
<feature type="transmembrane region" description="Helical" evidence="2">
    <location>
        <begin position="35"/>
        <end position="55"/>
    </location>
</feature>
<feature type="topological domain" description="Cytoplasmic" evidence="1">
    <location>
        <begin position="56"/>
        <end position="57"/>
    </location>
</feature>
<feature type="transmembrane region" description="Helical" evidence="2">
    <location>
        <begin position="58"/>
        <end position="78"/>
    </location>
</feature>
<feature type="topological domain" description="Extracellular" evidence="1">
    <location>
        <begin position="79"/>
        <end position="90"/>
    </location>
</feature>
<feature type="transmembrane region" description="Helical" evidence="2">
    <location>
        <begin position="91"/>
        <end position="111"/>
    </location>
</feature>
<feature type="topological domain" description="Cytoplasmic" evidence="1">
    <location>
        <begin position="112"/>
        <end position="135"/>
    </location>
</feature>
<feature type="transmembrane region" description="Helical" evidence="2">
    <location>
        <begin position="136"/>
        <end position="156"/>
    </location>
</feature>
<feature type="topological domain" description="Extracellular" evidence="1">
    <location>
        <begin position="157"/>
        <end position="171"/>
    </location>
</feature>
<feature type="transmembrane region" description="Helical" evidence="2">
    <location>
        <begin position="172"/>
        <end position="192"/>
    </location>
</feature>
<feature type="topological domain" description="Cytoplasmic" evidence="1">
    <location>
        <begin position="193"/>
        <end position="241"/>
    </location>
</feature>
<feature type="transmembrane region" description="Helical" evidence="2">
    <location>
        <begin position="242"/>
        <end position="262"/>
    </location>
</feature>
<feature type="topological domain" description="Extracellular" evidence="1">
    <location>
        <begin position="263"/>
        <end position="281"/>
    </location>
</feature>
<feature type="transmembrane region" description="Helical" evidence="2">
    <location>
        <begin position="282"/>
        <end position="302"/>
    </location>
</feature>
<feature type="topological domain" description="Cytoplasmic" evidence="1">
    <location>
        <begin position="303"/>
        <end position="382"/>
    </location>
</feature>
<feature type="glycosylation site" description="N-linked (GlcNAc...) asparagine" evidence="2">
    <location>
        <position position="3"/>
    </location>
</feature>
<feature type="glycosylation site" description="N-linked (GlcNAc...) asparagine" evidence="2">
    <location>
        <position position="6"/>
    </location>
</feature>